<dbReference type="EC" id="3.1.-.-" evidence="1"/>
<dbReference type="EC" id="5.6.2.4" evidence="1"/>
<dbReference type="EMBL" id="CP000612">
    <property type="protein sequence ID" value="ABO49946.1"/>
    <property type="molecule type" value="Genomic_DNA"/>
</dbReference>
<dbReference type="RefSeq" id="WP_011877765.1">
    <property type="nucleotide sequence ID" value="NC_009253.1"/>
</dbReference>
<dbReference type="SMR" id="A4J4E3"/>
<dbReference type="STRING" id="349161.Dred_1416"/>
<dbReference type="KEGG" id="drm:Dred_1416"/>
<dbReference type="eggNOG" id="COG1074">
    <property type="taxonomic scope" value="Bacteria"/>
</dbReference>
<dbReference type="HOGENOM" id="CLU_001114_3_1_9"/>
<dbReference type="OrthoDB" id="9810135at2"/>
<dbReference type="Proteomes" id="UP000001556">
    <property type="component" value="Chromosome"/>
</dbReference>
<dbReference type="GO" id="GO:0005829">
    <property type="term" value="C:cytosol"/>
    <property type="evidence" value="ECO:0007669"/>
    <property type="project" value="TreeGrafter"/>
</dbReference>
<dbReference type="GO" id="GO:0033202">
    <property type="term" value="C:DNA helicase complex"/>
    <property type="evidence" value="ECO:0007669"/>
    <property type="project" value="TreeGrafter"/>
</dbReference>
<dbReference type="GO" id="GO:0043138">
    <property type="term" value="F:3'-5' DNA helicase activity"/>
    <property type="evidence" value="ECO:0007669"/>
    <property type="project" value="UniProtKB-UniRule"/>
</dbReference>
<dbReference type="GO" id="GO:0008408">
    <property type="term" value="F:3'-5' exonuclease activity"/>
    <property type="evidence" value="ECO:0007669"/>
    <property type="project" value="UniProtKB-UniRule"/>
</dbReference>
<dbReference type="GO" id="GO:0005524">
    <property type="term" value="F:ATP binding"/>
    <property type="evidence" value="ECO:0007669"/>
    <property type="project" value="UniProtKB-UniRule"/>
</dbReference>
<dbReference type="GO" id="GO:0016887">
    <property type="term" value="F:ATP hydrolysis activity"/>
    <property type="evidence" value="ECO:0007669"/>
    <property type="project" value="RHEA"/>
</dbReference>
<dbReference type="GO" id="GO:0003690">
    <property type="term" value="F:double-stranded DNA binding"/>
    <property type="evidence" value="ECO:0007669"/>
    <property type="project" value="UniProtKB-UniRule"/>
</dbReference>
<dbReference type="GO" id="GO:0000724">
    <property type="term" value="P:double-strand break repair via homologous recombination"/>
    <property type="evidence" value="ECO:0007669"/>
    <property type="project" value="UniProtKB-UniRule"/>
</dbReference>
<dbReference type="FunFam" id="3.40.50.300:FF:001236">
    <property type="entry name" value="ATP-dependent helicase/nuclease subunit A"/>
    <property type="match status" value="1"/>
</dbReference>
<dbReference type="Gene3D" id="3.90.320.10">
    <property type="match status" value="1"/>
</dbReference>
<dbReference type="Gene3D" id="3.40.50.300">
    <property type="entry name" value="P-loop containing nucleotide triphosphate hydrolases"/>
    <property type="match status" value="4"/>
</dbReference>
<dbReference type="HAMAP" id="MF_01451">
    <property type="entry name" value="AddA"/>
    <property type="match status" value="1"/>
</dbReference>
<dbReference type="InterPro" id="IPR014152">
    <property type="entry name" value="AddA"/>
</dbReference>
<dbReference type="InterPro" id="IPR014017">
    <property type="entry name" value="DNA_helicase_UvrD-like_C"/>
</dbReference>
<dbReference type="InterPro" id="IPR000212">
    <property type="entry name" value="DNA_helicase_UvrD/REP"/>
</dbReference>
<dbReference type="InterPro" id="IPR027417">
    <property type="entry name" value="P-loop_NTPase"/>
</dbReference>
<dbReference type="InterPro" id="IPR011604">
    <property type="entry name" value="PDDEXK-like_dom_sf"/>
</dbReference>
<dbReference type="InterPro" id="IPR038726">
    <property type="entry name" value="PDDEXK_AddAB-type"/>
</dbReference>
<dbReference type="InterPro" id="IPR011335">
    <property type="entry name" value="Restrct_endonuc-II-like"/>
</dbReference>
<dbReference type="InterPro" id="IPR014016">
    <property type="entry name" value="UvrD-like_ATP-bd"/>
</dbReference>
<dbReference type="NCBIfam" id="TIGR02785">
    <property type="entry name" value="addA_Gpos"/>
    <property type="match status" value="1"/>
</dbReference>
<dbReference type="PANTHER" id="PTHR11070:SF48">
    <property type="entry name" value="ATP-DEPENDENT HELICASE_NUCLEASE SUBUNIT A"/>
    <property type="match status" value="1"/>
</dbReference>
<dbReference type="PANTHER" id="PTHR11070">
    <property type="entry name" value="UVRD / RECB / PCRA DNA HELICASE FAMILY MEMBER"/>
    <property type="match status" value="1"/>
</dbReference>
<dbReference type="Pfam" id="PF12705">
    <property type="entry name" value="PDDEXK_1"/>
    <property type="match status" value="1"/>
</dbReference>
<dbReference type="Pfam" id="PF00580">
    <property type="entry name" value="UvrD-helicase"/>
    <property type="match status" value="1"/>
</dbReference>
<dbReference type="Pfam" id="PF13361">
    <property type="entry name" value="UvrD_C"/>
    <property type="match status" value="1"/>
</dbReference>
<dbReference type="SUPFAM" id="SSF52540">
    <property type="entry name" value="P-loop containing nucleoside triphosphate hydrolases"/>
    <property type="match status" value="1"/>
</dbReference>
<dbReference type="SUPFAM" id="SSF52980">
    <property type="entry name" value="Restriction endonuclease-like"/>
    <property type="match status" value="1"/>
</dbReference>
<dbReference type="PROSITE" id="PS51198">
    <property type="entry name" value="UVRD_HELICASE_ATP_BIND"/>
    <property type="match status" value="1"/>
</dbReference>
<dbReference type="PROSITE" id="PS51217">
    <property type="entry name" value="UVRD_HELICASE_CTER"/>
    <property type="match status" value="1"/>
</dbReference>
<keyword id="KW-0067">ATP-binding</keyword>
<keyword id="KW-0227">DNA damage</keyword>
<keyword id="KW-0234">DNA repair</keyword>
<keyword id="KW-0238">DNA-binding</keyword>
<keyword id="KW-0269">Exonuclease</keyword>
<keyword id="KW-0347">Helicase</keyword>
<keyword id="KW-0378">Hydrolase</keyword>
<keyword id="KW-0413">Isomerase</keyword>
<keyword id="KW-0540">Nuclease</keyword>
<keyword id="KW-0547">Nucleotide-binding</keyword>
<keyword id="KW-1185">Reference proteome</keyword>
<name>ADDA_DESRM</name>
<reference key="1">
    <citation type="submission" date="2007-03" db="EMBL/GenBank/DDBJ databases">
        <title>Complete sequence of Desulfotomaculum reducens MI-1.</title>
        <authorList>
            <consortium name="US DOE Joint Genome Institute"/>
            <person name="Copeland A."/>
            <person name="Lucas S."/>
            <person name="Lapidus A."/>
            <person name="Barry K."/>
            <person name="Detter J.C."/>
            <person name="Glavina del Rio T."/>
            <person name="Hammon N."/>
            <person name="Israni S."/>
            <person name="Dalin E."/>
            <person name="Tice H."/>
            <person name="Pitluck S."/>
            <person name="Sims D."/>
            <person name="Brettin T."/>
            <person name="Bruce D."/>
            <person name="Han C."/>
            <person name="Tapia R."/>
            <person name="Schmutz J."/>
            <person name="Larimer F."/>
            <person name="Land M."/>
            <person name="Hauser L."/>
            <person name="Kyrpides N."/>
            <person name="Kim E."/>
            <person name="Tebo B.M."/>
            <person name="Richardson P."/>
        </authorList>
    </citation>
    <scope>NUCLEOTIDE SEQUENCE [LARGE SCALE GENOMIC DNA]</scope>
    <source>
        <strain>ATCC BAA-1160 / DSM 100696 / MI-1</strain>
    </source>
</reference>
<proteinExistence type="inferred from homology"/>
<organism>
    <name type="scientific">Desulforamulus reducens (strain ATCC BAA-1160 / DSM 100696 / MI-1)</name>
    <name type="common">Desulfotomaculum reducens</name>
    <dbReference type="NCBI Taxonomy" id="349161"/>
    <lineage>
        <taxon>Bacteria</taxon>
        <taxon>Bacillati</taxon>
        <taxon>Bacillota</taxon>
        <taxon>Clostridia</taxon>
        <taxon>Eubacteriales</taxon>
        <taxon>Peptococcaceae</taxon>
        <taxon>Desulforamulus</taxon>
    </lineage>
</organism>
<protein>
    <recommendedName>
        <fullName evidence="1">ATP-dependent helicase/nuclease subunit A</fullName>
        <ecNumber evidence="1">3.1.-.-</ecNumber>
        <ecNumber evidence="1">5.6.2.4</ecNumber>
    </recommendedName>
    <alternativeName>
        <fullName evidence="1">ATP-dependent helicase/nuclease AddA</fullName>
    </alternativeName>
    <alternativeName>
        <fullName evidence="1">DNA 3'-5' helicase AddA</fullName>
    </alternativeName>
</protein>
<evidence type="ECO:0000255" key="1">
    <source>
        <dbReference type="HAMAP-Rule" id="MF_01451"/>
    </source>
</evidence>
<evidence type="ECO:0000256" key="2">
    <source>
        <dbReference type="SAM" id="MobiDB-lite"/>
    </source>
</evidence>
<feature type="chain" id="PRO_0000379269" description="ATP-dependent helicase/nuclease subunit A">
    <location>
        <begin position="1"/>
        <end position="1244"/>
    </location>
</feature>
<feature type="domain" description="UvrD-like helicase ATP-binding" evidence="1">
    <location>
        <begin position="4"/>
        <end position="475"/>
    </location>
</feature>
<feature type="domain" description="UvrD-like helicase C-terminal" evidence="1">
    <location>
        <begin position="515"/>
        <end position="816"/>
    </location>
</feature>
<feature type="region of interest" description="Disordered" evidence="2">
    <location>
        <begin position="538"/>
        <end position="559"/>
    </location>
</feature>
<feature type="binding site" evidence="1">
    <location>
        <begin position="25"/>
        <end position="32"/>
    </location>
    <ligand>
        <name>ATP</name>
        <dbReference type="ChEBI" id="CHEBI:30616"/>
    </ligand>
</feature>
<sequence length="1244" mass="141080">MSDKKWTAEQLAAITTRDTNLLVAAAAGAGKTAVLVERIIGLITDPHRPVDVDQLLIVTFTNAAAAEMRERIGQALSKALQENPHSKRLARQLTMLNRASITTLHSFCLDLLRRYFYQLDLDPGFRVADEVEAELLRLDVLEELFERRYNQDNVEVFARLVDSYGGQRDDSRLQDLVLELYRFSGSHPLPVQWLTSLAENYVIPEGKTLDDQTWIVQIKKTIFQEVEGVLGLLKQAQWLAKQPGGPEPYSKTLTEDIINIKPLTNNDWDASWEKLYRSITAIKWSKLSPCRGEIDDQLKNKAQNLRNKAKEKFNDIINTYFSAEPTVILEDLRSLQPLIADLAKLTIEFMELYQKKKQAKGLVDFGDLEHYCLTILLDKENDAAEFRPSAVAIELQQQYAEVLVDEYQDINAVQETILRLVSKKNNRFMVGDVKQSIYRFRLAEPKLFLSKSELYANTDNCQGTRIGLSKNFRSRLEVVNAVNFIFRQIMTKKAGEITYDELEELHCGADYPQAEDVKTATGPVEVYLIDRKDAQLEEQNTDSAEEKLTDGEEQEDLDSDQAEARLIGRRIQAMVKGTDKAMGPEFKVWDKEIGKYRPVSYRDIVILLRATTGRANTFLEELRTMGVPTYAEVGTGYFEAVEVETFLSLLKIIDNPRQDVPLAGVLRSPVVGLKASDLAEIRLCSKEGDFYDAVRIAAAADLGDVAVTLTKFLRQLENWRSRARRDTLADLIWLLYRETGYYDYVGGMVGGTQRQANLRVLYHRAKQFEATSFRGLFRFLRFVERLKDSGSDLGAARSLSENEDVVRIMSIHKSKGLEFPVLFVAGLGKRFNMMDLNKDMLMHKELGLGPQIIHLGSRVSYPSLPKLLIKQQIRKESVAEEMRVLYVALTRAREKLILVGAVRDLEKSLEKWCTSTYQAGWTLPDAELMAAKCYLDWLCPAIARHHNGHELRSLAKTEGQPFSEVATDPSAWQLVFQALKDIKNQTQENKEQSQGLLVKIKDMEPFEDAGLIKEVERRLSWQYPRAEVTTRPAKAAVTEVKHKFDELARQEAGVMSYRPKISGRPRFLQQDKGLTPAERGSAIHLVMQHIPLDKLPDEEGVQVLLQNLIQKEILLPQQAAAINPNHITGFFASSIGQRVLQAPKVERELPFSLALPATEVYQELPECGDEMVLVQGVIDCLVDEGDGFLLIDYKSDAVYPGQDSPVDRYRGQINLYARAVQDILGKPVKDRVIYLFNNGQIVHI</sequence>
<accession>A4J4E3</accession>
<comment type="function">
    <text evidence="1">The heterodimer acts as both an ATP-dependent DNA helicase and an ATP-dependent, dual-direction single-stranded exonuclease. Recognizes the chi site generating a DNA molecule suitable for the initiation of homologous recombination. The AddA nuclease domain is required for chi fragment generation; this subunit has the helicase and 3' -&gt; 5' nuclease activities.</text>
</comment>
<comment type="catalytic activity">
    <reaction evidence="1">
        <text>Couples ATP hydrolysis with the unwinding of duplex DNA by translocating in the 3'-5' direction.</text>
        <dbReference type="EC" id="5.6.2.4"/>
    </reaction>
</comment>
<comment type="catalytic activity">
    <reaction evidence="1">
        <text>ATP + H2O = ADP + phosphate + H(+)</text>
        <dbReference type="Rhea" id="RHEA:13065"/>
        <dbReference type="ChEBI" id="CHEBI:15377"/>
        <dbReference type="ChEBI" id="CHEBI:15378"/>
        <dbReference type="ChEBI" id="CHEBI:30616"/>
        <dbReference type="ChEBI" id="CHEBI:43474"/>
        <dbReference type="ChEBI" id="CHEBI:456216"/>
        <dbReference type="EC" id="5.6.2.4"/>
    </reaction>
</comment>
<comment type="cofactor">
    <cofactor evidence="1">
        <name>Mg(2+)</name>
        <dbReference type="ChEBI" id="CHEBI:18420"/>
    </cofactor>
</comment>
<comment type="subunit">
    <text evidence="1">Heterodimer of AddA and AddB/RexB.</text>
</comment>
<comment type="similarity">
    <text evidence="1">Belongs to the helicase family. AddA subfamily.</text>
</comment>
<gene>
    <name evidence="1" type="primary">addA</name>
    <name type="ordered locus">Dred_1416</name>
</gene>